<comment type="similarity">
    <text evidence="1">Belongs to the UPF0340 family.</text>
</comment>
<proteinExistence type="inferred from homology"/>
<gene>
    <name type="ordered locus">SAS2017</name>
</gene>
<evidence type="ECO:0000255" key="1">
    <source>
        <dbReference type="HAMAP-Rule" id="MF_00800"/>
    </source>
</evidence>
<accession>Q6G7J6</accession>
<protein>
    <recommendedName>
        <fullName evidence="1">UPF0340 protein SAS2017</fullName>
    </recommendedName>
</protein>
<dbReference type="EMBL" id="BX571857">
    <property type="protein sequence ID" value="CAG43825.1"/>
    <property type="molecule type" value="Genomic_DNA"/>
</dbReference>
<dbReference type="RefSeq" id="WP_000654185.1">
    <property type="nucleotide sequence ID" value="NC_002953.3"/>
</dbReference>
<dbReference type="SMR" id="Q6G7J6"/>
<dbReference type="KEGG" id="sas:SAS2017"/>
<dbReference type="HOGENOM" id="CLU_106658_0_0_9"/>
<dbReference type="Gene3D" id="3.40.50.10360">
    <property type="entry name" value="Hypothetical protein TT1679"/>
    <property type="match status" value="1"/>
</dbReference>
<dbReference type="HAMAP" id="MF_00800">
    <property type="entry name" value="UPF0340"/>
    <property type="match status" value="1"/>
</dbReference>
<dbReference type="InterPro" id="IPR028345">
    <property type="entry name" value="Antibiotic_NAT-like"/>
</dbReference>
<dbReference type="InterPro" id="IPR006340">
    <property type="entry name" value="DUF436"/>
</dbReference>
<dbReference type="NCBIfam" id="TIGR01440">
    <property type="entry name" value="TIGR01440 family protein"/>
    <property type="match status" value="1"/>
</dbReference>
<dbReference type="Pfam" id="PF04260">
    <property type="entry name" value="DUF436"/>
    <property type="match status" value="1"/>
</dbReference>
<dbReference type="PIRSF" id="PIRSF007510">
    <property type="entry name" value="UCP007510"/>
    <property type="match status" value="1"/>
</dbReference>
<dbReference type="SUPFAM" id="SSF110710">
    <property type="entry name" value="TTHA0583/YokD-like"/>
    <property type="match status" value="1"/>
</dbReference>
<name>Y2017_STAAS</name>
<sequence length="174" mass="18895">MKDLTMLLDELKDMSFFNKGDICLIGCSTSEVIGEKIGTVGSMEVAETIFNALDVVSKETGVTFAFQGCEHINRAITIEKSQYNPLTMEEVSVVPDVHAGGSLATYAFQHMKDPIVVEHITVPCGIDIGQTLIGMHIKHVCVPVRTSVKQVGQAIVTIATSRPKKIGGERAKYQ</sequence>
<feature type="chain" id="PRO_0000213014" description="UPF0340 protein SAS2017">
    <location>
        <begin position="1"/>
        <end position="174"/>
    </location>
</feature>
<organism>
    <name type="scientific">Staphylococcus aureus (strain MSSA476)</name>
    <dbReference type="NCBI Taxonomy" id="282459"/>
    <lineage>
        <taxon>Bacteria</taxon>
        <taxon>Bacillati</taxon>
        <taxon>Bacillota</taxon>
        <taxon>Bacilli</taxon>
        <taxon>Bacillales</taxon>
        <taxon>Staphylococcaceae</taxon>
        <taxon>Staphylococcus</taxon>
    </lineage>
</organism>
<reference key="1">
    <citation type="journal article" date="2004" name="Proc. Natl. Acad. Sci. U.S.A.">
        <title>Complete genomes of two clinical Staphylococcus aureus strains: evidence for the rapid evolution of virulence and drug resistance.</title>
        <authorList>
            <person name="Holden M.T.G."/>
            <person name="Feil E.J."/>
            <person name="Lindsay J.A."/>
            <person name="Peacock S.J."/>
            <person name="Day N.P.J."/>
            <person name="Enright M.C."/>
            <person name="Foster T.J."/>
            <person name="Moore C.E."/>
            <person name="Hurst L."/>
            <person name="Atkin R."/>
            <person name="Barron A."/>
            <person name="Bason N."/>
            <person name="Bentley S.D."/>
            <person name="Chillingworth C."/>
            <person name="Chillingworth T."/>
            <person name="Churcher C."/>
            <person name="Clark L."/>
            <person name="Corton C."/>
            <person name="Cronin A."/>
            <person name="Doggett J."/>
            <person name="Dowd L."/>
            <person name="Feltwell T."/>
            <person name="Hance Z."/>
            <person name="Harris B."/>
            <person name="Hauser H."/>
            <person name="Holroyd S."/>
            <person name="Jagels K."/>
            <person name="James K.D."/>
            <person name="Lennard N."/>
            <person name="Line A."/>
            <person name="Mayes R."/>
            <person name="Moule S."/>
            <person name="Mungall K."/>
            <person name="Ormond D."/>
            <person name="Quail M.A."/>
            <person name="Rabbinowitsch E."/>
            <person name="Rutherford K.M."/>
            <person name="Sanders M."/>
            <person name="Sharp S."/>
            <person name="Simmonds M."/>
            <person name="Stevens K."/>
            <person name="Whitehead S."/>
            <person name="Barrell B.G."/>
            <person name="Spratt B.G."/>
            <person name="Parkhill J."/>
        </authorList>
    </citation>
    <scope>NUCLEOTIDE SEQUENCE [LARGE SCALE GENOMIC DNA]</scope>
    <source>
        <strain>MSSA476</strain>
    </source>
</reference>